<organism>
    <name type="scientific">Rickettsia massiliae (strain Mtu5)</name>
    <dbReference type="NCBI Taxonomy" id="416276"/>
    <lineage>
        <taxon>Bacteria</taxon>
        <taxon>Pseudomonadati</taxon>
        <taxon>Pseudomonadota</taxon>
        <taxon>Alphaproteobacteria</taxon>
        <taxon>Rickettsiales</taxon>
        <taxon>Rickettsiaceae</taxon>
        <taxon>Rickettsieae</taxon>
        <taxon>Rickettsia</taxon>
        <taxon>spotted fever group</taxon>
    </lineage>
</organism>
<name>RS3_RICM5</name>
<sequence length="217" mass="24559">MGQKVCAHGFRVGPTLIKGWDSVLYAEKHYKTLFIQDLKIRDVINKGFNQAQISRVLIERPSNKSIIININAKKPNIIIGRNGSEIDKLKKAIEKMTSLKEVYINIHEVRKFNIDAAIVAQTIALQLEKRVSFRKAMKTAIQASFKQGGQGIRVSCSGRLGGAEIARTEWYIEGRMPLHTLRADIDYSTAEAITTYGVIGVKVWIYKGEYTENKRYN</sequence>
<reference key="1">
    <citation type="journal article" date="2007" name="Genome Res.">
        <title>Lateral gene transfer between obligate intracellular bacteria: evidence from the Rickettsia massiliae genome.</title>
        <authorList>
            <person name="Blanc G."/>
            <person name="Ogata H."/>
            <person name="Robert C."/>
            <person name="Audic S."/>
            <person name="Claverie J.-M."/>
            <person name="Raoult D."/>
        </authorList>
    </citation>
    <scope>NUCLEOTIDE SEQUENCE [LARGE SCALE GENOMIC DNA]</scope>
    <source>
        <strain>Mtu5</strain>
    </source>
</reference>
<evidence type="ECO:0000255" key="1">
    <source>
        <dbReference type="HAMAP-Rule" id="MF_01309"/>
    </source>
</evidence>
<evidence type="ECO:0000305" key="2"/>
<dbReference type="EMBL" id="CP000683">
    <property type="protein sequence ID" value="ABV85077.1"/>
    <property type="status" value="ALT_INIT"/>
    <property type="molecule type" value="Genomic_DNA"/>
</dbReference>
<dbReference type="RefSeq" id="WP_041404816.1">
    <property type="nucleotide sequence ID" value="NC_009900.1"/>
</dbReference>
<dbReference type="SMR" id="A8F2E1"/>
<dbReference type="KEGG" id="rms:RMA_1034"/>
<dbReference type="HOGENOM" id="CLU_058591_0_2_5"/>
<dbReference type="Proteomes" id="UP000001311">
    <property type="component" value="Chromosome"/>
</dbReference>
<dbReference type="GO" id="GO:0022627">
    <property type="term" value="C:cytosolic small ribosomal subunit"/>
    <property type="evidence" value="ECO:0007669"/>
    <property type="project" value="TreeGrafter"/>
</dbReference>
<dbReference type="GO" id="GO:0003729">
    <property type="term" value="F:mRNA binding"/>
    <property type="evidence" value="ECO:0007669"/>
    <property type="project" value="UniProtKB-UniRule"/>
</dbReference>
<dbReference type="GO" id="GO:0019843">
    <property type="term" value="F:rRNA binding"/>
    <property type="evidence" value="ECO:0007669"/>
    <property type="project" value="UniProtKB-UniRule"/>
</dbReference>
<dbReference type="GO" id="GO:0003735">
    <property type="term" value="F:structural constituent of ribosome"/>
    <property type="evidence" value="ECO:0007669"/>
    <property type="project" value="InterPro"/>
</dbReference>
<dbReference type="GO" id="GO:0006412">
    <property type="term" value="P:translation"/>
    <property type="evidence" value="ECO:0007669"/>
    <property type="project" value="UniProtKB-UniRule"/>
</dbReference>
<dbReference type="CDD" id="cd02412">
    <property type="entry name" value="KH-II_30S_S3"/>
    <property type="match status" value="1"/>
</dbReference>
<dbReference type="FunFam" id="3.30.300.20:FF:000001">
    <property type="entry name" value="30S ribosomal protein S3"/>
    <property type="match status" value="1"/>
</dbReference>
<dbReference type="Gene3D" id="3.30.300.20">
    <property type="match status" value="1"/>
</dbReference>
<dbReference type="Gene3D" id="3.30.1140.32">
    <property type="entry name" value="Ribosomal protein S3, C-terminal domain"/>
    <property type="match status" value="1"/>
</dbReference>
<dbReference type="HAMAP" id="MF_01309_B">
    <property type="entry name" value="Ribosomal_uS3_B"/>
    <property type="match status" value="1"/>
</dbReference>
<dbReference type="InterPro" id="IPR004087">
    <property type="entry name" value="KH_dom"/>
</dbReference>
<dbReference type="InterPro" id="IPR015946">
    <property type="entry name" value="KH_dom-like_a/b"/>
</dbReference>
<dbReference type="InterPro" id="IPR004044">
    <property type="entry name" value="KH_dom_type_2"/>
</dbReference>
<dbReference type="InterPro" id="IPR009019">
    <property type="entry name" value="KH_sf_prok-type"/>
</dbReference>
<dbReference type="InterPro" id="IPR036419">
    <property type="entry name" value="Ribosomal_S3_C_sf"/>
</dbReference>
<dbReference type="InterPro" id="IPR005704">
    <property type="entry name" value="Ribosomal_uS3_bac-typ"/>
</dbReference>
<dbReference type="InterPro" id="IPR001351">
    <property type="entry name" value="Ribosomal_uS3_C"/>
</dbReference>
<dbReference type="InterPro" id="IPR018280">
    <property type="entry name" value="Ribosomal_uS3_CS"/>
</dbReference>
<dbReference type="NCBIfam" id="TIGR01009">
    <property type="entry name" value="rpsC_bact"/>
    <property type="match status" value="1"/>
</dbReference>
<dbReference type="PANTHER" id="PTHR11760">
    <property type="entry name" value="30S/40S RIBOSOMAL PROTEIN S3"/>
    <property type="match status" value="1"/>
</dbReference>
<dbReference type="PANTHER" id="PTHR11760:SF19">
    <property type="entry name" value="SMALL RIBOSOMAL SUBUNIT PROTEIN US3C"/>
    <property type="match status" value="1"/>
</dbReference>
<dbReference type="Pfam" id="PF07650">
    <property type="entry name" value="KH_2"/>
    <property type="match status" value="1"/>
</dbReference>
<dbReference type="Pfam" id="PF00189">
    <property type="entry name" value="Ribosomal_S3_C"/>
    <property type="match status" value="1"/>
</dbReference>
<dbReference type="SMART" id="SM00322">
    <property type="entry name" value="KH"/>
    <property type="match status" value="1"/>
</dbReference>
<dbReference type="SUPFAM" id="SSF54814">
    <property type="entry name" value="Prokaryotic type KH domain (KH-domain type II)"/>
    <property type="match status" value="1"/>
</dbReference>
<dbReference type="SUPFAM" id="SSF54821">
    <property type="entry name" value="Ribosomal protein S3 C-terminal domain"/>
    <property type="match status" value="1"/>
</dbReference>
<dbReference type="PROSITE" id="PS50823">
    <property type="entry name" value="KH_TYPE_2"/>
    <property type="match status" value="1"/>
</dbReference>
<dbReference type="PROSITE" id="PS00548">
    <property type="entry name" value="RIBOSOMAL_S3"/>
    <property type="match status" value="1"/>
</dbReference>
<protein>
    <recommendedName>
        <fullName evidence="1">Small ribosomal subunit protein uS3</fullName>
    </recommendedName>
    <alternativeName>
        <fullName evidence="2">30S ribosomal protein S3</fullName>
    </alternativeName>
</protein>
<feature type="chain" id="PRO_0000323304" description="Small ribosomal subunit protein uS3">
    <location>
        <begin position="1"/>
        <end position="217"/>
    </location>
</feature>
<feature type="domain" description="KH type-2" evidence="1">
    <location>
        <begin position="40"/>
        <end position="110"/>
    </location>
</feature>
<comment type="function">
    <text evidence="1">Binds the lower part of the 30S subunit head. Binds mRNA in the 70S ribosome, positioning it for translation.</text>
</comment>
<comment type="subunit">
    <text evidence="1">Part of the 30S ribosomal subunit. Forms a tight complex with proteins S10 and S14.</text>
</comment>
<comment type="similarity">
    <text evidence="1">Belongs to the universal ribosomal protein uS3 family.</text>
</comment>
<comment type="sequence caution" evidence="2">
    <conflict type="erroneous initiation">
        <sequence resource="EMBL-CDS" id="ABV85077"/>
    </conflict>
</comment>
<gene>
    <name evidence="1" type="primary">rpsC</name>
    <name type="ordered locus">RMA_1034</name>
</gene>
<accession>A8F2E1</accession>
<keyword id="KW-0687">Ribonucleoprotein</keyword>
<keyword id="KW-0689">Ribosomal protein</keyword>
<keyword id="KW-0694">RNA-binding</keyword>
<keyword id="KW-0699">rRNA-binding</keyword>
<proteinExistence type="inferred from homology"/>